<protein>
    <recommendedName>
        <fullName evidence="1">Large ribosomal subunit protein uL1</fullName>
    </recommendedName>
    <alternativeName>
        <fullName evidence="2">50S ribosomal protein L1</fullName>
    </alternativeName>
</protein>
<dbReference type="EMBL" id="CP000249">
    <property type="protein sequence ID" value="ABD09954.1"/>
    <property type="status" value="ALT_INIT"/>
    <property type="molecule type" value="Genomic_DNA"/>
</dbReference>
<dbReference type="RefSeq" id="WP_023839793.1">
    <property type="nucleotide sequence ID" value="NZ_JENI01000032.1"/>
</dbReference>
<dbReference type="SMR" id="Q2JFI8"/>
<dbReference type="STRING" id="106370.Francci3_0570"/>
<dbReference type="KEGG" id="fra:Francci3_0570"/>
<dbReference type="eggNOG" id="COG0081">
    <property type="taxonomic scope" value="Bacteria"/>
</dbReference>
<dbReference type="HOGENOM" id="CLU_062853_0_0_11"/>
<dbReference type="OrthoDB" id="9803740at2"/>
<dbReference type="Proteomes" id="UP000001937">
    <property type="component" value="Chromosome"/>
</dbReference>
<dbReference type="GO" id="GO:0015934">
    <property type="term" value="C:large ribosomal subunit"/>
    <property type="evidence" value="ECO:0007669"/>
    <property type="project" value="InterPro"/>
</dbReference>
<dbReference type="GO" id="GO:0019843">
    <property type="term" value="F:rRNA binding"/>
    <property type="evidence" value="ECO:0007669"/>
    <property type="project" value="UniProtKB-UniRule"/>
</dbReference>
<dbReference type="GO" id="GO:0003735">
    <property type="term" value="F:structural constituent of ribosome"/>
    <property type="evidence" value="ECO:0007669"/>
    <property type="project" value="InterPro"/>
</dbReference>
<dbReference type="GO" id="GO:0000049">
    <property type="term" value="F:tRNA binding"/>
    <property type="evidence" value="ECO:0007669"/>
    <property type="project" value="UniProtKB-KW"/>
</dbReference>
<dbReference type="GO" id="GO:0006417">
    <property type="term" value="P:regulation of translation"/>
    <property type="evidence" value="ECO:0007669"/>
    <property type="project" value="UniProtKB-KW"/>
</dbReference>
<dbReference type="GO" id="GO:0006412">
    <property type="term" value="P:translation"/>
    <property type="evidence" value="ECO:0007669"/>
    <property type="project" value="UniProtKB-UniRule"/>
</dbReference>
<dbReference type="CDD" id="cd00403">
    <property type="entry name" value="Ribosomal_L1"/>
    <property type="match status" value="1"/>
</dbReference>
<dbReference type="FunFam" id="3.40.50.790:FF:000001">
    <property type="entry name" value="50S ribosomal protein L1"/>
    <property type="match status" value="1"/>
</dbReference>
<dbReference type="Gene3D" id="3.30.190.20">
    <property type="match status" value="1"/>
</dbReference>
<dbReference type="Gene3D" id="3.40.50.790">
    <property type="match status" value="1"/>
</dbReference>
<dbReference type="HAMAP" id="MF_01318_B">
    <property type="entry name" value="Ribosomal_uL1_B"/>
    <property type="match status" value="1"/>
</dbReference>
<dbReference type="InterPro" id="IPR005878">
    <property type="entry name" value="Ribosom_uL1_bac-type"/>
</dbReference>
<dbReference type="InterPro" id="IPR002143">
    <property type="entry name" value="Ribosomal_uL1"/>
</dbReference>
<dbReference type="InterPro" id="IPR023674">
    <property type="entry name" value="Ribosomal_uL1-like"/>
</dbReference>
<dbReference type="InterPro" id="IPR028364">
    <property type="entry name" value="Ribosomal_uL1/biogenesis"/>
</dbReference>
<dbReference type="InterPro" id="IPR016095">
    <property type="entry name" value="Ribosomal_uL1_3-a/b-sand"/>
</dbReference>
<dbReference type="InterPro" id="IPR023673">
    <property type="entry name" value="Ribosomal_uL1_CS"/>
</dbReference>
<dbReference type="NCBIfam" id="TIGR01169">
    <property type="entry name" value="rplA_bact"/>
    <property type="match status" value="1"/>
</dbReference>
<dbReference type="PANTHER" id="PTHR36427">
    <property type="entry name" value="54S RIBOSOMAL PROTEIN L1, MITOCHONDRIAL"/>
    <property type="match status" value="1"/>
</dbReference>
<dbReference type="PANTHER" id="PTHR36427:SF3">
    <property type="entry name" value="LARGE RIBOSOMAL SUBUNIT PROTEIN UL1M"/>
    <property type="match status" value="1"/>
</dbReference>
<dbReference type="Pfam" id="PF00687">
    <property type="entry name" value="Ribosomal_L1"/>
    <property type="match status" value="1"/>
</dbReference>
<dbReference type="PIRSF" id="PIRSF002155">
    <property type="entry name" value="Ribosomal_L1"/>
    <property type="match status" value="1"/>
</dbReference>
<dbReference type="SUPFAM" id="SSF56808">
    <property type="entry name" value="Ribosomal protein L1"/>
    <property type="match status" value="1"/>
</dbReference>
<dbReference type="PROSITE" id="PS01199">
    <property type="entry name" value="RIBOSOMAL_L1"/>
    <property type="match status" value="1"/>
</dbReference>
<comment type="function">
    <text evidence="1">Binds directly to 23S rRNA. The L1 stalk is quite mobile in the ribosome, and is involved in E site tRNA release.</text>
</comment>
<comment type="function">
    <text evidence="1">Protein L1 is also a translational repressor protein, it controls the translation of the L11 operon by binding to its mRNA.</text>
</comment>
<comment type="subunit">
    <text evidence="1">Part of the 50S ribosomal subunit.</text>
</comment>
<comment type="similarity">
    <text evidence="1">Belongs to the universal ribosomal protein uL1 family.</text>
</comment>
<comment type="sequence caution" evidence="2">
    <conflict type="erroneous initiation">
        <sequence resource="EMBL-CDS" id="ABD09954"/>
    </conflict>
</comment>
<sequence>MKRSKAYRAAAEKINPENFYSPLEAVRLAQQTSTTKYDATVEVAIRLGVDPRKADQMVRGTVNLPHGTGKSPRVAVFAAGEKAAEASAAGADIVGSDDLVARIQEGFLEFDATVATPDQMAKVGRIARVLGPRGLMPNPKTGTVTLDIGKAVSDIKGGKINFRVDKQGNLHIVIGKTNFTDTQLIENYTVALDEIVRVKPSAAKGRYLKKITFTTTMGPGIPVDPNRTRNLLDEGAAA</sequence>
<organism>
    <name type="scientific">Frankia casuarinae (strain DSM 45818 / CECT 9043 / HFP020203 / CcI3)</name>
    <dbReference type="NCBI Taxonomy" id="106370"/>
    <lineage>
        <taxon>Bacteria</taxon>
        <taxon>Bacillati</taxon>
        <taxon>Actinomycetota</taxon>
        <taxon>Actinomycetes</taxon>
        <taxon>Frankiales</taxon>
        <taxon>Frankiaceae</taxon>
        <taxon>Frankia</taxon>
    </lineage>
</organism>
<feature type="chain" id="PRO_0000307655" description="Large ribosomal subunit protein uL1">
    <location>
        <begin position="1"/>
        <end position="238"/>
    </location>
</feature>
<reference key="1">
    <citation type="journal article" date="2007" name="Genome Res.">
        <title>Genome characteristics of facultatively symbiotic Frankia sp. strains reflect host range and host plant biogeography.</title>
        <authorList>
            <person name="Normand P."/>
            <person name="Lapierre P."/>
            <person name="Tisa L.S."/>
            <person name="Gogarten J.P."/>
            <person name="Alloisio N."/>
            <person name="Bagnarol E."/>
            <person name="Bassi C.A."/>
            <person name="Berry A.M."/>
            <person name="Bickhart D.M."/>
            <person name="Choisne N."/>
            <person name="Couloux A."/>
            <person name="Cournoyer B."/>
            <person name="Cruveiller S."/>
            <person name="Daubin V."/>
            <person name="Demange N."/>
            <person name="Francino M.P."/>
            <person name="Goltsman E."/>
            <person name="Huang Y."/>
            <person name="Kopp O.R."/>
            <person name="Labarre L."/>
            <person name="Lapidus A."/>
            <person name="Lavire C."/>
            <person name="Marechal J."/>
            <person name="Martinez M."/>
            <person name="Mastronunzio J.E."/>
            <person name="Mullin B.C."/>
            <person name="Niemann J."/>
            <person name="Pujic P."/>
            <person name="Rawnsley T."/>
            <person name="Rouy Z."/>
            <person name="Schenowitz C."/>
            <person name="Sellstedt A."/>
            <person name="Tavares F."/>
            <person name="Tomkins J.P."/>
            <person name="Vallenet D."/>
            <person name="Valverde C."/>
            <person name="Wall L.G."/>
            <person name="Wang Y."/>
            <person name="Medigue C."/>
            <person name="Benson D.R."/>
        </authorList>
    </citation>
    <scope>NUCLEOTIDE SEQUENCE [LARGE SCALE GENOMIC DNA]</scope>
    <source>
        <strain>DSM 45818 / CECT 9043 / HFP020203 / CcI3</strain>
    </source>
</reference>
<accession>Q2JFI8</accession>
<proteinExistence type="inferred from homology"/>
<name>RL1_FRACC</name>
<gene>
    <name evidence="1" type="primary">rplA</name>
    <name type="ordered locus">Francci3_0570</name>
</gene>
<evidence type="ECO:0000255" key="1">
    <source>
        <dbReference type="HAMAP-Rule" id="MF_01318"/>
    </source>
</evidence>
<evidence type="ECO:0000305" key="2"/>
<keyword id="KW-1185">Reference proteome</keyword>
<keyword id="KW-0678">Repressor</keyword>
<keyword id="KW-0687">Ribonucleoprotein</keyword>
<keyword id="KW-0689">Ribosomal protein</keyword>
<keyword id="KW-0694">RNA-binding</keyword>
<keyword id="KW-0699">rRNA-binding</keyword>
<keyword id="KW-0810">Translation regulation</keyword>
<keyword id="KW-0820">tRNA-binding</keyword>